<comment type="function">
    <text evidence="1">Involved in the biosynthesis of the chorismate, which leads to the biosynthesis of aromatic amino acids. Catalyzes the reversible NADPH linked reduction of 3-dehydroshikimate (DHSA) to yield shikimate (SA).</text>
</comment>
<comment type="catalytic activity">
    <reaction evidence="1">
        <text>shikimate + NADP(+) = 3-dehydroshikimate + NADPH + H(+)</text>
        <dbReference type="Rhea" id="RHEA:17737"/>
        <dbReference type="ChEBI" id="CHEBI:15378"/>
        <dbReference type="ChEBI" id="CHEBI:16630"/>
        <dbReference type="ChEBI" id="CHEBI:36208"/>
        <dbReference type="ChEBI" id="CHEBI:57783"/>
        <dbReference type="ChEBI" id="CHEBI:58349"/>
        <dbReference type="EC" id="1.1.1.25"/>
    </reaction>
</comment>
<comment type="pathway">
    <text evidence="1">Metabolic intermediate biosynthesis; chorismate biosynthesis; chorismate from D-erythrose 4-phosphate and phosphoenolpyruvate: step 4/7.</text>
</comment>
<comment type="subunit">
    <text evidence="1">Homodimer.</text>
</comment>
<comment type="similarity">
    <text evidence="1">Belongs to the shikimate dehydrogenase family.</text>
</comment>
<reference key="1">
    <citation type="journal article" date="2004" name="Nucleic Acids Res.">
        <title>Genome sequence of Symbiobacterium thermophilum, an uncultivable bacterium that depends on microbial commensalism.</title>
        <authorList>
            <person name="Ueda K."/>
            <person name="Yamashita A."/>
            <person name="Ishikawa J."/>
            <person name="Shimada M."/>
            <person name="Watsuji T."/>
            <person name="Morimura K."/>
            <person name="Ikeda H."/>
            <person name="Hattori M."/>
            <person name="Beppu T."/>
        </authorList>
    </citation>
    <scope>NUCLEOTIDE SEQUENCE [LARGE SCALE GENOMIC DNA]</scope>
    <source>
        <strain>DSM 24528 / JCM 14929 / IAM 14863 / T</strain>
    </source>
</reference>
<feature type="chain" id="PRO_0000325174" description="Shikimate dehydrogenase (NADP(+))">
    <location>
        <begin position="1"/>
        <end position="294"/>
    </location>
</feature>
<feature type="active site" description="Proton acceptor" evidence="1">
    <location>
        <position position="76"/>
    </location>
</feature>
<feature type="binding site" evidence="1">
    <location>
        <begin position="25"/>
        <end position="27"/>
    </location>
    <ligand>
        <name>shikimate</name>
        <dbReference type="ChEBI" id="CHEBI:36208"/>
    </ligand>
</feature>
<feature type="binding site" evidence="1">
    <location>
        <position position="72"/>
    </location>
    <ligand>
        <name>shikimate</name>
        <dbReference type="ChEBI" id="CHEBI:36208"/>
    </ligand>
</feature>
<feature type="binding site" evidence="1">
    <location>
        <position position="97"/>
    </location>
    <ligand>
        <name>shikimate</name>
        <dbReference type="ChEBI" id="CHEBI:36208"/>
    </ligand>
</feature>
<feature type="binding site" evidence="1">
    <location>
        <position position="112"/>
    </location>
    <ligand>
        <name>shikimate</name>
        <dbReference type="ChEBI" id="CHEBI:36208"/>
    </ligand>
</feature>
<feature type="binding site" evidence="1">
    <location>
        <begin position="136"/>
        <end position="140"/>
    </location>
    <ligand>
        <name>NADP(+)</name>
        <dbReference type="ChEBI" id="CHEBI:58349"/>
    </ligand>
</feature>
<feature type="binding site" evidence="1">
    <location>
        <position position="234"/>
    </location>
    <ligand>
        <name>NADP(+)</name>
        <dbReference type="ChEBI" id="CHEBI:58349"/>
    </ligand>
</feature>
<feature type="binding site" evidence="1">
    <location>
        <position position="236"/>
    </location>
    <ligand>
        <name>shikimate</name>
        <dbReference type="ChEBI" id="CHEBI:36208"/>
    </ligand>
</feature>
<feature type="binding site" evidence="1">
    <location>
        <position position="257"/>
    </location>
    <ligand>
        <name>NADP(+)</name>
        <dbReference type="ChEBI" id="CHEBI:58349"/>
    </ligand>
</feature>
<evidence type="ECO:0000255" key="1">
    <source>
        <dbReference type="HAMAP-Rule" id="MF_00222"/>
    </source>
</evidence>
<proteinExistence type="inferred from homology"/>
<protein>
    <recommendedName>
        <fullName evidence="1">Shikimate dehydrogenase (NADP(+))</fullName>
        <shortName evidence="1">SDH</shortName>
        <ecNumber evidence="1">1.1.1.25</ecNumber>
    </recommendedName>
</protein>
<organism>
    <name type="scientific">Symbiobacterium thermophilum (strain DSM 24528 / JCM 14929 / IAM 14863 / T)</name>
    <dbReference type="NCBI Taxonomy" id="292459"/>
    <lineage>
        <taxon>Bacteria</taxon>
        <taxon>Bacillati</taxon>
        <taxon>Bacillota</taxon>
        <taxon>Clostridia</taxon>
        <taxon>Eubacteriales</taxon>
        <taxon>Symbiobacteriaceae</taxon>
        <taxon>Symbiobacterium</taxon>
    </lineage>
</organism>
<gene>
    <name evidence="1" type="primary">aroE</name>
    <name type="ordered locus">STH1952</name>
</gene>
<dbReference type="EC" id="1.1.1.25" evidence="1"/>
<dbReference type="EMBL" id="AP006840">
    <property type="protein sequence ID" value="BAD40937.1"/>
    <property type="molecule type" value="Genomic_DNA"/>
</dbReference>
<dbReference type="RefSeq" id="WP_011196079.1">
    <property type="nucleotide sequence ID" value="NC_006177.1"/>
</dbReference>
<dbReference type="SMR" id="Q67N06"/>
<dbReference type="STRING" id="292459.STH1952"/>
<dbReference type="KEGG" id="sth:STH1952"/>
<dbReference type="eggNOG" id="COG0169">
    <property type="taxonomic scope" value="Bacteria"/>
</dbReference>
<dbReference type="HOGENOM" id="CLU_044063_0_1_9"/>
<dbReference type="OrthoDB" id="9792692at2"/>
<dbReference type="UniPathway" id="UPA00053">
    <property type="reaction ID" value="UER00087"/>
</dbReference>
<dbReference type="Proteomes" id="UP000000417">
    <property type="component" value="Chromosome"/>
</dbReference>
<dbReference type="GO" id="GO:0050661">
    <property type="term" value="F:NADP binding"/>
    <property type="evidence" value="ECO:0007669"/>
    <property type="project" value="InterPro"/>
</dbReference>
<dbReference type="GO" id="GO:0004764">
    <property type="term" value="F:shikimate 3-dehydrogenase (NADP+) activity"/>
    <property type="evidence" value="ECO:0007669"/>
    <property type="project" value="UniProtKB-UniRule"/>
</dbReference>
<dbReference type="GO" id="GO:0008652">
    <property type="term" value="P:amino acid biosynthetic process"/>
    <property type="evidence" value="ECO:0007669"/>
    <property type="project" value="UniProtKB-KW"/>
</dbReference>
<dbReference type="GO" id="GO:0009073">
    <property type="term" value="P:aromatic amino acid family biosynthetic process"/>
    <property type="evidence" value="ECO:0007669"/>
    <property type="project" value="UniProtKB-KW"/>
</dbReference>
<dbReference type="GO" id="GO:0009423">
    <property type="term" value="P:chorismate biosynthetic process"/>
    <property type="evidence" value="ECO:0007669"/>
    <property type="project" value="UniProtKB-UniRule"/>
</dbReference>
<dbReference type="GO" id="GO:0019632">
    <property type="term" value="P:shikimate metabolic process"/>
    <property type="evidence" value="ECO:0007669"/>
    <property type="project" value="InterPro"/>
</dbReference>
<dbReference type="CDD" id="cd01065">
    <property type="entry name" value="NAD_bind_Shikimate_DH"/>
    <property type="match status" value="1"/>
</dbReference>
<dbReference type="FunFam" id="3.40.50.10860:FF:000004">
    <property type="entry name" value="Quinate/shikimate dehydrogenase"/>
    <property type="match status" value="1"/>
</dbReference>
<dbReference type="Gene3D" id="3.40.50.10860">
    <property type="entry name" value="Leucine Dehydrogenase, chain A, domain 1"/>
    <property type="match status" value="1"/>
</dbReference>
<dbReference type="Gene3D" id="3.40.50.720">
    <property type="entry name" value="NAD(P)-binding Rossmann-like Domain"/>
    <property type="match status" value="1"/>
</dbReference>
<dbReference type="HAMAP" id="MF_00222">
    <property type="entry name" value="Shikimate_DH_AroE"/>
    <property type="match status" value="1"/>
</dbReference>
<dbReference type="InterPro" id="IPR046346">
    <property type="entry name" value="Aminoacid_DH-like_N_sf"/>
</dbReference>
<dbReference type="InterPro" id="IPR036291">
    <property type="entry name" value="NAD(P)-bd_dom_sf"/>
</dbReference>
<dbReference type="InterPro" id="IPR041121">
    <property type="entry name" value="SDH_C"/>
</dbReference>
<dbReference type="InterPro" id="IPR011342">
    <property type="entry name" value="Shikimate_DH"/>
</dbReference>
<dbReference type="InterPro" id="IPR013708">
    <property type="entry name" value="Shikimate_DH-bd_N"/>
</dbReference>
<dbReference type="InterPro" id="IPR022893">
    <property type="entry name" value="Shikimate_DH_fam"/>
</dbReference>
<dbReference type="InterPro" id="IPR006151">
    <property type="entry name" value="Shikm_DH/Glu-tRNA_Rdtase"/>
</dbReference>
<dbReference type="NCBIfam" id="TIGR00507">
    <property type="entry name" value="aroE"/>
    <property type="match status" value="1"/>
</dbReference>
<dbReference type="NCBIfam" id="NF001314">
    <property type="entry name" value="PRK00258.2-2"/>
    <property type="match status" value="1"/>
</dbReference>
<dbReference type="NCBIfam" id="NF001319">
    <property type="entry name" value="PRK00258.3-3"/>
    <property type="match status" value="1"/>
</dbReference>
<dbReference type="PANTHER" id="PTHR21089:SF1">
    <property type="entry name" value="BIFUNCTIONAL 3-DEHYDROQUINATE DEHYDRATASE_SHIKIMATE DEHYDROGENASE, CHLOROPLASTIC"/>
    <property type="match status" value="1"/>
</dbReference>
<dbReference type="PANTHER" id="PTHR21089">
    <property type="entry name" value="SHIKIMATE DEHYDROGENASE"/>
    <property type="match status" value="1"/>
</dbReference>
<dbReference type="Pfam" id="PF18317">
    <property type="entry name" value="SDH_C"/>
    <property type="match status" value="1"/>
</dbReference>
<dbReference type="Pfam" id="PF01488">
    <property type="entry name" value="Shikimate_DH"/>
    <property type="match status" value="1"/>
</dbReference>
<dbReference type="Pfam" id="PF08501">
    <property type="entry name" value="Shikimate_dh_N"/>
    <property type="match status" value="1"/>
</dbReference>
<dbReference type="SUPFAM" id="SSF53223">
    <property type="entry name" value="Aminoacid dehydrogenase-like, N-terminal domain"/>
    <property type="match status" value="1"/>
</dbReference>
<dbReference type="SUPFAM" id="SSF51735">
    <property type="entry name" value="NAD(P)-binding Rossmann-fold domains"/>
    <property type="match status" value="1"/>
</dbReference>
<name>AROE_SYMTH</name>
<accession>Q67N06</accession>
<keyword id="KW-0028">Amino-acid biosynthesis</keyword>
<keyword id="KW-0057">Aromatic amino acid biosynthesis</keyword>
<keyword id="KW-0521">NADP</keyword>
<keyword id="KW-0560">Oxidoreductase</keyword>
<keyword id="KW-1185">Reference proteome</keyword>
<sequence length="294" mass="31067">MTKRRSTSRGPGRILGILGHPVAHSASPAMHNAAFAAQGMHAMYGAFDVPPSQLEKAIAGIRALGLLGVNVTIPHKEAVMAYLDDVAPTARQVGAVNTIVNRGGRLIGYNTDGWGFLLSLEERGVRVAGRNAVVLGAGGAARAVALHLGMAGVARLTIINRSRQRAEFLAADLARAKTPVRAEVADPGSEEARAALAEAGLVVNCTPLGMEPDTESTPLEDVGLLPAHCVVYDTVYRPLETRLLREARQHGLITVNGLAMLVHQGACAWEYWFGRRGPVDVMRTAALAALEGQP</sequence>